<gene>
    <name evidence="1" type="primary">rplS</name>
    <name type="ordered locus">Bcen2424_1072</name>
</gene>
<comment type="function">
    <text evidence="1">This protein is located at the 30S-50S ribosomal subunit interface and may play a role in the structure and function of the aminoacyl-tRNA binding site.</text>
</comment>
<comment type="similarity">
    <text evidence="1">Belongs to the bacterial ribosomal protein bL19 family.</text>
</comment>
<accession>A0K5P8</accession>
<reference key="1">
    <citation type="submission" date="2006-08" db="EMBL/GenBank/DDBJ databases">
        <title>Complete sequence of chromosome 1 of Burkholderia cenocepacia HI2424.</title>
        <authorList>
            <person name="Copeland A."/>
            <person name="Lucas S."/>
            <person name="Lapidus A."/>
            <person name="Barry K."/>
            <person name="Detter J.C."/>
            <person name="Glavina del Rio T."/>
            <person name="Hammon N."/>
            <person name="Israni S."/>
            <person name="Pitluck S."/>
            <person name="Chain P."/>
            <person name="Malfatti S."/>
            <person name="Shin M."/>
            <person name="Vergez L."/>
            <person name="Schmutz J."/>
            <person name="Larimer F."/>
            <person name="Land M."/>
            <person name="Hauser L."/>
            <person name="Kyrpides N."/>
            <person name="Kim E."/>
            <person name="LiPuma J.J."/>
            <person name="Gonzalez C.F."/>
            <person name="Konstantinidis K."/>
            <person name="Tiedje J.M."/>
            <person name="Richardson P."/>
        </authorList>
    </citation>
    <scope>NUCLEOTIDE SEQUENCE [LARGE SCALE GENOMIC DNA]</scope>
    <source>
        <strain>HI2424</strain>
    </source>
</reference>
<sequence>MNLIAKLEQEEIERALAGKTIPDFAPGDTVIVNVNVVEGNRKRVQAYEGVVIAIRNRGLNSNFIVRKISSGEGVERTFQTYSPLLASIVVKRRGDVRRAKLYYLRERSGKSARIKEKLVSKDRAAAASQE</sequence>
<feature type="chain" id="PRO_1000049642" description="Large ribosomal subunit protein bL19">
    <location>
        <begin position="1"/>
        <end position="130"/>
    </location>
</feature>
<protein>
    <recommendedName>
        <fullName evidence="1">Large ribosomal subunit protein bL19</fullName>
    </recommendedName>
    <alternativeName>
        <fullName evidence="2">50S ribosomal protein L19</fullName>
    </alternativeName>
</protein>
<proteinExistence type="inferred from homology"/>
<keyword id="KW-0687">Ribonucleoprotein</keyword>
<keyword id="KW-0689">Ribosomal protein</keyword>
<dbReference type="EMBL" id="CP000458">
    <property type="protein sequence ID" value="ABK07825.1"/>
    <property type="molecule type" value="Genomic_DNA"/>
</dbReference>
<dbReference type="RefSeq" id="WP_006486838.1">
    <property type="nucleotide sequence ID" value="NC_008542.1"/>
</dbReference>
<dbReference type="SMR" id="A0K5P8"/>
<dbReference type="GeneID" id="83047824"/>
<dbReference type="KEGG" id="bch:Bcen2424_1072"/>
<dbReference type="HOGENOM" id="CLU_103507_1_0_4"/>
<dbReference type="GO" id="GO:0022625">
    <property type="term" value="C:cytosolic large ribosomal subunit"/>
    <property type="evidence" value="ECO:0007669"/>
    <property type="project" value="TreeGrafter"/>
</dbReference>
<dbReference type="GO" id="GO:0003735">
    <property type="term" value="F:structural constituent of ribosome"/>
    <property type="evidence" value="ECO:0007669"/>
    <property type="project" value="InterPro"/>
</dbReference>
<dbReference type="GO" id="GO:0006412">
    <property type="term" value="P:translation"/>
    <property type="evidence" value="ECO:0007669"/>
    <property type="project" value="UniProtKB-UniRule"/>
</dbReference>
<dbReference type="FunFam" id="2.30.30.790:FF:000001">
    <property type="entry name" value="50S ribosomal protein L19"/>
    <property type="match status" value="1"/>
</dbReference>
<dbReference type="Gene3D" id="2.30.30.790">
    <property type="match status" value="1"/>
</dbReference>
<dbReference type="HAMAP" id="MF_00402">
    <property type="entry name" value="Ribosomal_bL19"/>
    <property type="match status" value="1"/>
</dbReference>
<dbReference type="InterPro" id="IPR001857">
    <property type="entry name" value="Ribosomal_bL19"/>
</dbReference>
<dbReference type="InterPro" id="IPR018257">
    <property type="entry name" value="Ribosomal_bL19_CS"/>
</dbReference>
<dbReference type="InterPro" id="IPR038657">
    <property type="entry name" value="Ribosomal_bL19_sf"/>
</dbReference>
<dbReference type="InterPro" id="IPR008991">
    <property type="entry name" value="Translation_prot_SH3-like_sf"/>
</dbReference>
<dbReference type="NCBIfam" id="TIGR01024">
    <property type="entry name" value="rplS_bact"/>
    <property type="match status" value="1"/>
</dbReference>
<dbReference type="PANTHER" id="PTHR15680:SF9">
    <property type="entry name" value="LARGE RIBOSOMAL SUBUNIT PROTEIN BL19M"/>
    <property type="match status" value="1"/>
</dbReference>
<dbReference type="PANTHER" id="PTHR15680">
    <property type="entry name" value="RIBOSOMAL PROTEIN L19"/>
    <property type="match status" value="1"/>
</dbReference>
<dbReference type="Pfam" id="PF01245">
    <property type="entry name" value="Ribosomal_L19"/>
    <property type="match status" value="1"/>
</dbReference>
<dbReference type="PIRSF" id="PIRSF002191">
    <property type="entry name" value="Ribosomal_L19"/>
    <property type="match status" value="1"/>
</dbReference>
<dbReference type="PRINTS" id="PR00061">
    <property type="entry name" value="RIBOSOMALL19"/>
</dbReference>
<dbReference type="SUPFAM" id="SSF50104">
    <property type="entry name" value="Translation proteins SH3-like domain"/>
    <property type="match status" value="1"/>
</dbReference>
<dbReference type="PROSITE" id="PS01015">
    <property type="entry name" value="RIBOSOMAL_L19"/>
    <property type="match status" value="1"/>
</dbReference>
<name>RL19_BURCH</name>
<organism>
    <name type="scientific">Burkholderia cenocepacia (strain HI2424)</name>
    <dbReference type="NCBI Taxonomy" id="331272"/>
    <lineage>
        <taxon>Bacteria</taxon>
        <taxon>Pseudomonadati</taxon>
        <taxon>Pseudomonadota</taxon>
        <taxon>Betaproteobacteria</taxon>
        <taxon>Burkholderiales</taxon>
        <taxon>Burkholderiaceae</taxon>
        <taxon>Burkholderia</taxon>
        <taxon>Burkholderia cepacia complex</taxon>
    </lineage>
</organism>
<evidence type="ECO:0000255" key="1">
    <source>
        <dbReference type="HAMAP-Rule" id="MF_00402"/>
    </source>
</evidence>
<evidence type="ECO:0000305" key="2"/>